<evidence type="ECO:0000255" key="1">
    <source>
        <dbReference type="HAMAP-Rule" id="MF_01358"/>
    </source>
</evidence>
<sequence length="366" mass="41578">MIRTEEMLLNVGPQHPSTHGVFRLVIKIDGEIIKEATPVIGYLHRGTEKIAESLQYTQIIPYTDRMDYLSAMTNNYVLCHAVETMMDLEIPERAEYLRVLAMELGRVASHLVWWGTNLLDIGAVSPFLYAFREREMIINLLSELCGARLTFNYMRVGGVKWDAPDGWIEKVKEFVPYMREQLEGYHDLVSGNEIFLNRVKGVGVYSAEEAISYSLSGANLRCTGVHWDLRKDEPYSIYDRFDFDVPVGSTGDAWDRYVCRMKEIEESLKIIEQAVEQFPKDGAVLAKVPKIIKAPKGEAFVRIESPRGEIGCYIASDGKKEPYRLKFRRPSFYNLQILPKLLKGENIANLITILGGVDIVLGEVDG</sequence>
<reference key="1">
    <citation type="journal article" date="2008" name="Chem. Biol. Interact.">
        <title>Extending the Bacillus cereus group genomics to putative food-borne pathogens of different toxicity.</title>
        <authorList>
            <person name="Lapidus A."/>
            <person name="Goltsman E."/>
            <person name="Auger S."/>
            <person name="Galleron N."/>
            <person name="Segurens B."/>
            <person name="Dossat C."/>
            <person name="Land M.L."/>
            <person name="Broussolle V."/>
            <person name="Brillard J."/>
            <person name="Guinebretiere M.-H."/>
            <person name="Sanchis V."/>
            <person name="Nguen-the C."/>
            <person name="Lereclus D."/>
            <person name="Richardson P."/>
            <person name="Wincker P."/>
            <person name="Weissenbach J."/>
            <person name="Ehrlich S.D."/>
            <person name="Sorokin A."/>
        </authorList>
    </citation>
    <scope>NUCLEOTIDE SEQUENCE [LARGE SCALE GENOMIC DNA]</scope>
    <source>
        <strain>KBAB4</strain>
    </source>
</reference>
<organism>
    <name type="scientific">Bacillus mycoides (strain KBAB4)</name>
    <name type="common">Bacillus weihenstephanensis</name>
    <dbReference type="NCBI Taxonomy" id="315730"/>
    <lineage>
        <taxon>Bacteria</taxon>
        <taxon>Bacillati</taxon>
        <taxon>Bacillota</taxon>
        <taxon>Bacilli</taxon>
        <taxon>Bacillales</taxon>
        <taxon>Bacillaceae</taxon>
        <taxon>Bacillus</taxon>
        <taxon>Bacillus cereus group</taxon>
    </lineage>
</organism>
<comment type="function">
    <text evidence="1">NDH-1 shuttles electrons from NADH, via FMN and iron-sulfur (Fe-S) centers, to quinones in the respiratory chain. The immediate electron acceptor for the enzyme in this species is believed to be a menaquinone. Couples the redox reaction to proton translocation (for every two electrons transferred, four hydrogen ions are translocated across the cytoplasmic membrane), and thus conserves the redox energy in a proton gradient.</text>
</comment>
<comment type="catalytic activity">
    <reaction evidence="1">
        <text>a quinone + NADH + 5 H(+)(in) = a quinol + NAD(+) + 4 H(+)(out)</text>
        <dbReference type="Rhea" id="RHEA:57888"/>
        <dbReference type="ChEBI" id="CHEBI:15378"/>
        <dbReference type="ChEBI" id="CHEBI:24646"/>
        <dbReference type="ChEBI" id="CHEBI:57540"/>
        <dbReference type="ChEBI" id="CHEBI:57945"/>
        <dbReference type="ChEBI" id="CHEBI:132124"/>
    </reaction>
</comment>
<comment type="subunit">
    <text evidence="1">NDH-1 is composed of 14 different subunits. Subunits NuoB, C, D, E, F, and G constitute the peripheral sector of the complex.</text>
</comment>
<comment type="subcellular location">
    <subcellularLocation>
        <location evidence="1">Cell membrane</location>
        <topology evidence="1">Peripheral membrane protein</topology>
        <orientation evidence="1">Cytoplasmic side</orientation>
    </subcellularLocation>
</comment>
<comment type="similarity">
    <text evidence="1">Belongs to the complex I 49 kDa subunit family.</text>
</comment>
<gene>
    <name evidence="1" type="primary">nuoD</name>
    <name type="ordered locus">BcerKBAB4_5095</name>
</gene>
<feature type="chain" id="PRO_0000357770" description="NADH-quinone oxidoreductase subunit D">
    <location>
        <begin position="1"/>
        <end position="366"/>
    </location>
</feature>
<dbReference type="EC" id="7.1.1.-" evidence="1"/>
<dbReference type="EMBL" id="CP000903">
    <property type="protein sequence ID" value="ABY46241.1"/>
    <property type="molecule type" value="Genomic_DNA"/>
</dbReference>
<dbReference type="RefSeq" id="WP_002143861.1">
    <property type="nucleotide sequence ID" value="NC_010184.1"/>
</dbReference>
<dbReference type="SMR" id="A9VS95"/>
<dbReference type="KEGG" id="bwe:BcerKBAB4_5095"/>
<dbReference type="eggNOG" id="COG0649">
    <property type="taxonomic scope" value="Bacteria"/>
</dbReference>
<dbReference type="HOGENOM" id="CLU_015134_1_2_9"/>
<dbReference type="Proteomes" id="UP000002154">
    <property type="component" value="Chromosome"/>
</dbReference>
<dbReference type="GO" id="GO:0005886">
    <property type="term" value="C:plasma membrane"/>
    <property type="evidence" value="ECO:0007669"/>
    <property type="project" value="UniProtKB-SubCell"/>
</dbReference>
<dbReference type="GO" id="GO:0051287">
    <property type="term" value="F:NAD binding"/>
    <property type="evidence" value="ECO:0007669"/>
    <property type="project" value="InterPro"/>
</dbReference>
<dbReference type="GO" id="GO:0050136">
    <property type="term" value="F:NADH:ubiquinone reductase (non-electrogenic) activity"/>
    <property type="evidence" value="ECO:0007669"/>
    <property type="project" value="UniProtKB-UniRule"/>
</dbReference>
<dbReference type="GO" id="GO:0048038">
    <property type="term" value="F:quinone binding"/>
    <property type="evidence" value="ECO:0007669"/>
    <property type="project" value="UniProtKB-KW"/>
</dbReference>
<dbReference type="FunFam" id="1.10.645.10:FF:000006">
    <property type="entry name" value="NADH-quinone oxidoreductase subunit D"/>
    <property type="match status" value="1"/>
</dbReference>
<dbReference type="Gene3D" id="1.10.645.10">
    <property type="entry name" value="Cytochrome-c3 Hydrogenase, chain B"/>
    <property type="match status" value="1"/>
</dbReference>
<dbReference type="HAMAP" id="MF_01358">
    <property type="entry name" value="NDH1_NuoD"/>
    <property type="match status" value="1"/>
</dbReference>
<dbReference type="InterPro" id="IPR001135">
    <property type="entry name" value="NADH_Q_OxRdtase_suD"/>
</dbReference>
<dbReference type="InterPro" id="IPR022885">
    <property type="entry name" value="NDH1_su_D/H"/>
</dbReference>
<dbReference type="InterPro" id="IPR029014">
    <property type="entry name" value="NiFe-Hase_large"/>
</dbReference>
<dbReference type="NCBIfam" id="NF004739">
    <property type="entry name" value="PRK06075.1"/>
    <property type="match status" value="1"/>
</dbReference>
<dbReference type="NCBIfam" id="NF008974">
    <property type="entry name" value="PRK12322.1"/>
    <property type="match status" value="1"/>
</dbReference>
<dbReference type="PANTHER" id="PTHR11993:SF10">
    <property type="entry name" value="NADH DEHYDROGENASE [UBIQUINONE] IRON-SULFUR PROTEIN 2, MITOCHONDRIAL"/>
    <property type="match status" value="1"/>
</dbReference>
<dbReference type="PANTHER" id="PTHR11993">
    <property type="entry name" value="NADH-UBIQUINONE OXIDOREDUCTASE 49 KDA SUBUNIT"/>
    <property type="match status" value="1"/>
</dbReference>
<dbReference type="Pfam" id="PF00346">
    <property type="entry name" value="Complex1_49kDa"/>
    <property type="match status" value="2"/>
</dbReference>
<dbReference type="SUPFAM" id="SSF56762">
    <property type="entry name" value="HydB/Nqo4-like"/>
    <property type="match status" value="1"/>
</dbReference>
<accession>A9VS95</accession>
<name>NUOD_BACMK</name>
<proteinExistence type="inferred from homology"/>
<keyword id="KW-1003">Cell membrane</keyword>
<keyword id="KW-0472">Membrane</keyword>
<keyword id="KW-0520">NAD</keyword>
<keyword id="KW-0874">Quinone</keyword>
<keyword id="KW-1278">Translocase</keyword>
<keyword id="KW-0813">Transport</keyword>
<protein>
    <recommendedName>
        <fullName evidence="1">NADH-quinone oxidoreductase subunit D</fullName>
        <ecNumber evidence="1">7.1.1.-</ecNumber>
    </recommendedName>
    <alternativeName>
        <fullName evidence="1">NADH dehydrogenase I subunit D</fullName>
    </alternativeName>
    <alternativeName>
        <fullName evidence="1">NDH-1 subunit D</fullName>
    </alternativeName>
</protein>